<dbReference type="EC" id="2.7.7.6" evidence="1"/>
<dbReference type="EMBL" id="AE000783">
    <property type="protein sequence ID" value="AAB91502.1"/>
    <property type="molecule type" value="Genomic_DNA"/>
</dbReference>
<dbReference type="EMBL" id="L48488">
    <property type="protein sequence ID" value="AAC37119.1"/>
    <property type="molecule type" value="Genomic_DNA"/>
</dbReference>
<dbReference type="PIR" id="C70148">
    <property type="entry name" value="C70148"/>
</dbReference>
<dbReference type="RefSeq" id="NP_212522.1">
    <property type="nucleotide sequence ID" value="NC_001318.1"/>
</dbReference>
<dbReference type="RefSeq" id="WP_010889741.1">
    <property type="nucleotide sequence ID" value="NC_001318.1"/>
</dbReference>
<dbReference type="SMR" id="O51349"/>
<dbReference type="STRING" id="224326.BB_0388"/>
<dbReference type="PaxDb" id="224326-BB_0388"/>
<dbReference type="EnsemblBacteria" id="AAB91502">
    <property type="protein sequence ID" value="AAB91502"/>
    <property type="gene ID" value="BB_0388"/>
</dbReference>
<dbReference type="KEGG" id="bbu:BB_0388"/>
<dbReference type="PATRIC" id="fig|224326.49.peg.783"/>
<dbReference type="HOGENOM" id="CLU_000524_3_1_12"/>
<dbReference type="OrthoDB" id="9815296at2"/>
<dbReference type="Proteomes" id="UP000001807">
    <property type="component" value="Chromosome"/>
</dbReference>
<dbReference type="GO" id="GO:0000428">
    <property type="term" value="C:DNA-directed RNA polymerase complex"/>
    <property type="evidence" value="ECO:0007669"/>
    <property type="project" value="UniProtKB-KW"/>
</dbReference>
<dbReference type="GO" id="GO:0003677">
    <property type="term" value="F:DNA binding"/>
    <property type="evidence" value="ECO:0007669"/>
    <property type="project" value="UniProtKB-UniRule"/>
</dbReference>
<dbReference type="GO" id="GO:0003899">
    <property type="term" value="F:DNA-directed RNA polymerase activity"/>
    <property type="evidence" value="ECO:0007669"/>
    <property type="project" value="UniProtKB-UniRule"/>
</dbReference>
<dbReference type="GO" id="GO:0000287">
    <property type="term" value="F:magnesium ion binding"/>
    <property type="evidence" value="ECO:0007669"/>
    <property type="project" value="UniProtKB-UniRule"/>
</dbReference>
<dbReference type="GO" id="GO:0008270">
    <property type="term" value="F:zinc ion binding"/>
    <property type="evidence" value="ECO:0007669"/>
    <property type="project" value="UniProtKB-UniRule"/>
</dbReference>
<dbReference type="GO" id="GO:0006351">
    <property type="term" value="P:DNA-templated transcription"/>
    <property type="evidence" value="ECO:0007669"/>
    <property type="project" value="UniProtKB-UniRule"/>
</dbReference>
<dbReference type="CDD" id="cd02655">
    <property type="entry name" value="RNAP_beta'_C"/>
    <property type="match status" value="1"/>
</dbReference>
<dbReference type="CDD" id="cd01609">
    <property type="entry name" value="RNAP_beta'_N"/>
    <property type="match status" value="1"/>
</dbReference>
<dbReference type="Gene3D" id="1.10.132.30">
    <property type="match status" value="1"/>
</dbReference>
<dbReference type="Gene3D" id="1.10.150.390">
    <property type="match status" value="1"/>
</dbReference>
<dbReference type="Gene3D" id="1.10.1790.20">
    <property type="match status" value="1"/>
</dbReference>
<dbReference type="Gene3D" id="1.10.40.90">
    <property type="match status" value="1"/>
</dbReference>
<dbReference type="Gene3D" id="2.40.40.20">
    <property type="match status" value="1"/>
</dbReference>
<dbReference type="Gene3D" id="2.40.50.100">
    <property type="match status" value="2"/>
</dbReference>
<dbReference type="Gene3D" id="4.10.860.120">
    <property type="entry name" value="RNA polymerase II, clamp domain"/>
    <property type="match status" value="1"/>
</dbReference>
<dbReference type="Gene3D" id="1.10.274.100">
    <property type="entry name" value="RNA polymerase Rpb1, domain 3"/>
    <property type="match status" value="1"/>
</dbReference>
<dbReference type="HAMAP" id="MF_01322">
    <property type="entry name" value="RNApol_bact_RpoC"/>
    <property type="match status" value="1"/>
</dbReference>
<dbReference type="InterPro" id="IPR045867">
    <property type="entry name" value="DNA-dir_RpoC_beta_prime"/>
</dbReference>
<dbReference type="InterPro" id="IPR012754">
    <property type="entry name" value="DNA-dir_RpoC_beta_prime_bact"/>
</dbReference>
<dbReference type="InterPro" id="IPR000722">
    <property type="entry name" value="RNA_pol_asu"/>
</dbReference>
<dbReference type="InterPro" id="IPR006592">
    <property type="entry name" value="RNA_pol_N"/>
</dbReference>
<dbReference type="InterPro" id="IPR007080">
    <property type="entry name" value="RNA_pol_Rpb1_1"/>
</dbReference>
<dbReference type="InterPro" id="IPR007066">
    <property type="entry name" value="RNA_pol_Rpb1_3"/>
</dbReference>
<dbReference type="InterPro" id="IPR042102">
    <property type="entry name" value="RNA_pol_Rpb1_3_sf"/>
</dbReference>
<dbReference type="InterPro" id="IPR007083">
    <property type="entry name" value="RNA_pol_Rpb1_4"/>
</dbReference>
<dbReference type="InterPro" id="IPR007081">
    <property type="entry name" value="RNA_pol_Rpb1_5"/>
</dbReference>
<dbReference type="InterPro" id="IPR044893">
    <property type="entry name" value="RNA_pol_Rpb1_clamp_domain"/>
</dbReference>
<dbReference type="InterPro" id="IPR038120">
    <property type="entry name" value="Rpb1_funnel_sf"/>
</dbReference>
<dbReference type="NCBIfam" id="TIGR02386">
    <property type="entry name" value="rpoC_TIGR"/>
    <property type="match status" value="1"/>
</dbReference>
<dbReference type="PANTHER" id="PTHR19376">
    <property type="entry name" value="DNA-DIRECTED RNA POLYMERASE"/>
    <property type="match status" value="1"/>
</dbReference>
<dbReference type="PANTHER" id="PTHR19376:SF54">
    <property type="entry name" value="DNA-DIRECTED RNA POLYMERASE SUBUNIT BETA"/>
    <property type="match status" value="1"/>
</dbReference>
<dbReference type="Pfam" id="PF04997">
    <property type="entry name" value="RNA_pol_Rpb1_1"/>
    <property type="match status" value="1"/>
</dbReference>
<dbReference type="Pfam" id="PF00623">
    <property type="entry name" value="RNA_pol_Rpb1_2"/>
    <property type="match status" value="2"/>
</dbReference>
<dbReference type="Pfam" id="PF04983">
    <property type="entry name" value="RNA_pol_Rpb1_3"/>
    <property type="match status" value="1"/>
</dbReference>
<dbReference type="Pfam" id="PF05000">
    <property type="entry name" value="RNA_pol_Rpb1_4"/>
    <property type="match status" value="1"/>
</dbReference>
<dbReference type="Pfam" id="PF04998">
    <property type="entry name" value="RNA_pol_Rpb1_5"/>
    <property type="match status" value="1"/>
</dbReference>
<dbReference type="SMART" id="SM00663">
    <property type="entry name" value="RPOLA_N"/>
    <property type="match status" value="1"/>
</dbReference>
<dbReference type="SUPFAM" id="SSF64484">
    <property type="entry name" value="beta and beta-prime subunits of DNA dependent RNA-polymerase"/>
    <property type="match status" value="1"/>
</dbReference>
<feature type="chain" id="PRO_0000067711" description="DNA-directed RNA polymerase subunit beta'">
    <location>
        <begin position="1"/>
        <end position="1377"/>
    </location>
</feature>
<feature type="binding site" evidence="1">
    <location>
        <position position="60"/>
    </location>
    <ligand>
        <name>Zn(2+)</name>
        <dbReference type="ChEBI" id="CHEBI:29105"/>
        <label>1</label>
    </ligand>
</feature>
<feature type="binding site" evidence="1">
    <location>
        <position position="62"/>
    </location>
    <ligand>
        <name>Zn(2+)</name>
        <dbReference type="ChEBI" id="CHEBI:29105"/>
        <label>1</label>
    </ligand>
</feature>
<feature type="binding site" evidence="1">
    <location>
        <position position="75"/>
    </location>
    <ligand>
        <name>Zn(2+)</name>
        <dbReference type="ChEBI" id="CHEBI:29105"/>
        <label>1</label>
    </ligand>
</feature>
<feature type="binding site" evidence="1">
    <location>
        <position position="78"/>
    </location>
    <ligand>
        <name>Zn(2+)</name>
        <dbReference type="ChEBI" id="CHEBI:29105"/>
        <label>1</label>
    </ligand>
</feature>
<feature type="binding site" evidence="1">
    <location>
        <position position="449"/>
    </location>
    <ligand>
        <name>Mg(2+)</name>
        <dbReference type="ChEBI" id="CHEBI:18420"/>
    </ligand>
</feature>
<feature type="binding site" evidence="1">
    <location>
        <position position="451"/>
    </location>
    <ligand>
        <name>Mg(2+)</name>
        <dbReference type="ChEBI" id="CHEBI:18420"/>
    </ligand>
</feature>
<feature type="binding site" evidence="1">
    <location>
        <position position="453"/>
    </location>
    <ligand>
        <name>Mg(2+)</name>
        <dbReference type="ChEBI" id="CHEBI:18420"/>
    </ligand>
</feature>
<feature type="binding site" evidence="1">
    <location>
        <position position="777"/>
    </location>
    <ligand>
        <name>Zn(2+)</name>
        <dbReference type="ChEBI" id="CHEBI:29105"/>
        <label>2</label>
    </ligand>
</feature>
<feature type="binding site" evidence="1">
    <location>
        <position position="851"/>
    </location>
    <ligand>
        <name>Zn(2+)</name>
        <dbReference type="ChEBI" id="CHEBI:29105"/>
        <label>2</label>
    </ligand>
</feature>
<feature type="binding site" evidence="1">
    <location>
        <position position="858"/>
    </location>
    <ligand>
        <name>Zn(2+)</name>
        <dbReference type="ChEBI" id="CHEBI:29105"/>
        <label>2</label>
    </ligand>
</feature>
<feature type="binding site" evidence="1">
    <location>
        <position position="861"/>
    </location>
    <ligand>
        <name>Zn(2+)</name>
        <dbReference type="ChEBI" id="CHEBI:29105"/>
        <label>2</label>
    </ligand>
</feature>
<feature type="sequence conflict" description="In Ref. 2; AAC37119." evidence="2" ref="2">
    <original>P</original>
    <variation>S</variation>
    <location>
        <position position="17"/>
    </location>
</feature>
<evidence type="ECO:0000255" key="1">
    <source>
        <dbReference type="HAMAP-Rule" id="MF_01322"/>
    </source>
</evidence>
<evidence type="ECO:0000305" key="2"/>
<name>RPOC_BORBU</name>
<reference key="1">
    <citation type="journal article" date="1997" name="Nature">
        <title>Genomic sequence of a Lyme disease spirochaete, Borrelia burgdorferi.</title>
        <authorList>
            <person name="Fraser C.M."/>
            <person name="Casjens S."/>
            <person name="Huang W.M."/>
            <person name="Sutton G.G."/>
            <person name="Clayton R.A."/>
            <person name="Lathigra R."/>
            <person name="White O."/>
            <person name="Ketchum K.A."/>
            <person name="Dodson R.J."/>
            <person name="Hickey E.K."/>
            <person name="Gwinn M.L."/>
            <person name="Dougherty B.A."/>
            <person name="Tomb J.-F."/>
            <person name="Fleischmann R.D."/>
            <person name="Richardson D.L."/>
            <person name="Peterson J.D."/>
            <person name="Kerlavage A.R."/>
            <person name="Quackenbush J."/>
            <person name="Salzberg S.L."/>
            <person name="Hanson M."/>
            <person name="van Vugt R."/>
            <person name="Palmer N."/>
            <person name="Adams M.D."/>
            <person name="Gocayne J.D."/>
            <person name="Weidman J.F."/>
            <person name="Utterback T.R."/>
            <person name="Watthey L."/>
            <person name="McDonald L.A."/>
            <person name="Artiach P."/>
            <person name="Bowman C."/>
            <person name="Garland S.A."/>
            <person name="Fujii C."/>
            <person name="Cotton M.D."/>
            <person name="Horst K."/>
            <person name="Roberts K.M."/>
            <person name="Hatch B."/>
            <person name="Smith H.O."/>
            <person name="Venter J.C."/>
        </authorList>
    </citation>
    <scope>NUCLEOTIDE SEQUENCE [LARGE SCALE GENOMIC DNA]</scope>
    <source>
        <strain>ATCC 35210 / DSM 4680 / CIP 102532 / B31</strain>
    </source>
</reference>
<reference key="2">
    <citation type="journal article" date="1997" name="Gene">
        <title>Molecular cloning and characterization of Borrelia burgdorferi rpoB.</title>
        <authorList>
            <person name="Alekshun M."/>
            <person name="Kashlev M."/>
            <person name="Schwartz I."/>
        </authorList>
    </citation>
    <scope>NUCLEOTIDE SEQUENCE [GENOMIC DNA] OF 1-19</scope>
    <source>
        <strain>ATCC 35210 / DSM 4680 / CIP 102532 / B31</strain>
    </source>
</reference>
<accession>O51349</accession>
<accession>Q45035</accession>
<protein>
    <recommendedName>
        <fullName evidence="1">DNA-directed RNA polymerase subunit beta'</fullName>
        <shortName evidence="1">RNAP subunit beta'</shortName>
        <ecNumber evidence="1">2.7.7.6</ecNumber>
    </recommendedName>
    <alternativeName>
        <fullName evidence="1">RNA polymerase subunit beta'</fullName>
    </alternativeName>
    <alternativeName>
        <fullName evidence="1">Transcriptase subunit beta'</fullName>
    </alternativeName>
</protein>
<sequence>MKEIKDFERIKIKIASPDQIRNWSYGEVKKSETINYRTLRPEKDGLFCERIFGTTKEWECYCGKFKSVRYKGIICDRCNVEVTHFKVRRERMGHIELAAPVAHIWYYKYIPSRIGLLLDITASSLNSILYYEKYVVIEPGDTDLKKMQLLNEDEYIEARERYGMSFNASMGAEAIKTLLENLDLDELSSKLRIQMIDKDDKTDKKLLRRLEIIENFKISGNKPEWMIMEVLPVIPPEIRPMVQLDGGRFATSDLNDLYRRVINRNNRLRKLLLLNAPEIIVRNEKRMLQESVDSLFDNSHKRKVVKGSSSRPLKSLSDALKGKQGRFRQNLLGKRVDYSGRSVIVVGPELKLHQCGLPAKMALELFKPFVIRRLIESEAVFNIKRAKNLIEQEVDEVWQILDLVIKEHPILLNRAPTLHRLGIQAFEPVLVEGKAIKLHPLVCHAYNADFDGDQMAVHVPLTPAAQAESWALMLSTNNLLNPANGHPIVFPSQDIVLGLYYLTMEKKNVVGEGKKFLNFNNVILAINNRSLDYNASIYVKIHGEYKKTTAGRVIFNEALPKGIEFVNKTLSDLELQILISKVYVVHGSSIVIEMLDIIKELGFRYATKFGCTISMSDIIVPDEKRTYVERANKEIAKIQNDYAKGVITGEERYNNVVSVWLKTNEELTNKMMEILKKDRDGFNVIYMMADSGARGSRNQIRQLAGMRGLMAKTSGDIIELPIISNFKEGLSVIEFFISTNGARKGLADTALKTADAGYLTRRLVDIAQDVVVRIEDCGTINGIKVETVKNGEEILESLKEKAVGSYSIERIKNPITGEIVLDANEEISEAKIELLEKIGIEKLVIRSVLTCEAEHGVCQKCYGRDFSKNKPVNIGEAVGIIAAQSIGQPGTQLTMRTFHIGGVAQAGSEDDKISLKNAFILNGIEGFNVRVDNGILFTRKGTLKIINVFYEEKIKNIKEIKVLDSQRVIKGIPLFIDKKGSEILSSYIGYVKLRDDNFFIVSEEQEVSLKAGTKLEIEVGDYVESGKVIGTFDPFAEPIIAEVKGKIKFKDIILGTTLKEEINTETGNVEKRITDNVFESLDPRIFIIDSSGMEVASYVLPGDAYLQVEDGQSINIGDIIAKLSKGSEKTQDITGGLPRVNDLFETRIPKNLTEMAKVSGIVQFKSIQKGKRLINILDEYGVEHKHYIPAGKHLLVRDGDVVKAGDMLCDGRINPHDVLEILGGISLQEFLLAEIQDVYRKQGVSINDKHIGVIIKQMMKKVKIVAVGDTNFVYGQKVDKHTFYEQNRKVIEQGGEPAIASPILIGVTKTSLNIDSFISAASFQETTKVLTDASIAGKIDDLRGLKENVVIGHLIPTGTGMGLYKKIKVSENIDSEV</sequence>
<keyword id="KW-0240">DNA-directed RNA polymerase</keyword>
<keyword id="KW-0460">Magnesium</keyword>
<keyword id="KW-0479">Metal-binding</keyword>
<keyword id="KW-0548">Nucleotidyltransferase</keyword>
<keyword id="KW-1185">Reference proteome</keyword>
<keyword id="KW-0804">Transcription</keyword>
<keyword id="KW-0808">Transferase</keyword>
<keyword id="KW-0862">Zinc</keyword>
<proteinExistence type="inferred from homology"/>
<comment type="function">
    <text evidence="1">DNA-dependent RNA polymerase catalyzes the transcription of DNA into RNA using the four ribonucleoside triphosphates as substrates.</text>
</comment>
<comment type="catalytic activity">
    <reaction evidence="1">
        <text>RNA(n) + a ribonucleoside 5'-triphosphate = RNA(n+1) + diphosphate</text>
        <dbReference type="Rhea" id="RHEA:21248"/>
        <dbReference type="Rhea" id="RHEA-COMP:14527"/>
        <dbReference type="Rhea" id="RHEA-COMP:17342"/>
        <dbReference type="ChEBI" id="CHEBI:33019"/>
        <dbReference type="ChEBI" id="CHEBI:61557"/>
        <dbReference type="ChEBI" id="CHEBI:140395"/>
        <dbReference type="EC" id="2.7.7.6"/>
    </reaction>
</comment>
<comment type="cofactor">
    <cofactor evidence="1">
        <name>Mg(2+)</name>
        <dbReference type="ChEBI" id="CHEBI:18420"/>
    </cofactor>
    <text evidence="1">Binds 1 Mg(2+) ion per subunit.</text>
</comment>
<comment type="cofactor">
    <cofactor evidence="1">
        <name>Zn(2+)</name>
        <dbReference type="ChEBI" id="CHEBI:29105"/>
    </cofactor>
    <text evidence="1">Binds 2 Zn(2+) ions per subunit.</text>
</comment>
<comment type="subunit">
    <text evidence="1">The RNAP catalytic core consists of 2 alpha, 1 beta, 1 beta' and 1 omega subunit. When a sigma factor is associated with the core the holoenzyme is formed, which can initiate transcription.</text>
</comment>
<comment type="similarity">
    <text evidence="1">Belongs to the RNA polymerase beta' chain family.</text>
</comment>
<gene>
    <name evidence="1" type="primary">rpoC</name>
    <name type="ordered locus">BB_0388</name>
</gene>
<organism>
    <name type="scientific">Borreliella burgdorferi (strain ATCC 35210 / DSM 4680 / CIP 102532 / B31)</name>
    <name type="common">Borrelia burgdorferi</name>
    <dbReference type="NCBI Taxonomy" id="224326"/>
    <lineage>
        <taxon>Bacteria</taxon>
        <taxon>Pseudomonadati</taxon>
        <taxon>Spirochaetota</taxon>
        <taxon>Spirochaetia</taxon>
        <taxon>Spirochaetales</taxon>
        <taxon>Borreliaceae</taxon>
        <taxon>Borreliella</taxon>
    </lineage>
</organism>